<comment type="function">
    <text>Core component of nucleosome. Nucleosomes wrap and compact DNA into chromatin, limiting DNA accessibility to the cellular machineries which require DNA as a template. Histones thereby play a central role in transcription regulation, DNA repair, DNA replication and chromosomal stability. DNA accessibility is regulated via a complex set of post-translational modifications of histones, also called histone code, and nucleosome remodeling.</text>
</comment>
<comment type="subunit">
    <text>The nucleosome is a histone octamer containing two molecules each of H2A, H2B, H3 and H4 assembled in one H3-H4 heterotetramer and two H2A-H2B heterodimers. The octamer wraps approximately 147 bp of DNA.</text>
</comment>
<comment type="subcellular location">
    <subcellularLocation>
        <location evidence="1">Nucleus</location>
    </subcellularLocation>
    <subcellularLocation>
        <location evidence="1">Chromosome</location>
    </subcellularLocation>
</comment>
<comment type="PTM">
    <text evidence="1">Can be acetylated to form H2BK6ac, H2BK33ac and H2BK34ac.</text>
</comment>
<comment type="PTM">
    <text>Monoubiquitinated by BRE1 to form H2BK143ub1 and deubiquitinated by UBP26. Required for heterochromatic histone H3 di- and trimethylation at H3K4me. May give a specific tag for epigenetic transcriptional activation.</text>
</comment>
<comment type="similarity">
    <text evidence="7">Belongs to the histone H2B family.</text>
</comment>
<comment type="caution">
    <text evidence="7">To ensure consistency between histone entries, we follow the 'Brno' nomenclature for histone modifications, with positions referring to those used in the literature for the 'closest' model organism. Due to slight variations in histone sequences between organisms and to the presence of initiator methionine in UniProtKB/Swiss-Prot sequences, the actual positions of modified amino acids in the sequence generally differ. In this entry the following conventions are used: H2BK6ac = acetylated Lys-8; H2BK33ac = acetylated Lys-29; H2BK34ac = acetylated Lys-30; H2BK143ub1 = monoubiquitinated Lys-135.</text>
</comment>
<evidence type="ECO:0000250" key="1"/>
<evidence type="ECO:0000250" key="2">
    <source>
        <dbReference type="UniProtKB" id="O23629"/>
    </source>
</evidence>
<evidence type="ECO:0000250" key="3">
    <source>
        <dbReference type="UniProtKB" id="Q9FFC0"/>
    </source>
</evidence>
<evidence type="ECO:0000250" key="4">
    <source>
        <dbReference type="UniProtKB" id="Q9LQQ4"/>
    </source>
</evidence>
<evidence type="ECO:0000250" key="5">
    <source>
        <dbReference type="UniProtKB" id="Q9LZT0"/>
    </source>
</evidence>
<evidence type="ECO:0000256" key="6">
    <source>
        <dbReference type="SAM" id="MobiDB-lite"/>
    </source>
</evidence>
<evidence type="ECO:0000305" key="7"/>
<keyword id="KW-0007">Acetylation</keyword>
<keyword id="KW-0158">Chromosome</keyword>
<keyword id="KW-0238">DNA-binding</keyword>
<keyword id="KW-1017">Isopeptide bond</keyword>
<keyword id="KW-0488">Methylation</keyword>
<keyword id="KW-0544">Nucleosome core</keyword>
<keyword id="KW-0539">Nucleus</keyword>
<keyword id="KW-1185">Reference proteome</keyword>
<keyword id="KW-0832">Ubl conjugation</keyword>
<gene>
    <name type="ordered locus">At2g37470</name>
    <name type="ORF">F3G5.26</name>
</gene>
<name>H2B4_ARATH</name>
<protein>
    <recommendedName>
        <fullName>Histone H2B.4</fullName>
    </recommendedName>
    <alternativeName>
        <fullName>HTB5</fullName>
    </alternativeName>
</protein>
<dbReference type="EMBL" id="AC005896">
    <property type="protein sequence ID" value="AAC98063.1"/>
    <property type="molecule type" value="Genomic_DNA"/>
</dbReference>
<dbReference type="EMBL" id="CP002685">
    <property type="protein sequence ID" value="AEC09404.1"/>
    <property type="molecule type" value="Genomic_DNA"/>
</dbReference>
<dbReference type="EMBL" id="BT005206">
    <property type="protein sequence ID" value="AAO63270.1"/>
    <property type="molecule type" value="mRNA"/>
</dbReference>
<dbReference type="EMBL" id="AY087125">
    <property type="protein sequence ID" value="AAM64683.1"/>
    <property type="molecule type" value="mRNA"/>
</dbReference>
<dbReference type="PIR" id="B84793">
    <property type="entry name" value="B84793"/>
</dbReference>
<dbReference type="RefSeq" id="NP_181283.1">
    <property type="nucleotide sequence ID" value="NM_129302.3"/>
</dbReference>
<dbReference type="SMR" id="Q9ZUS0"/>
<dbReference type="FunCoup" id="Q9ZUS0">
    <property type="interactions" value="1619"/>
</dbReference>
<dbReference type="STRING" id="3702.Q9ZUS0"/>
<dbReference type="iPTMnet" id="Q9ZUS0"/>
<dbReference type="PaxDb" id="3702-AT2G37470.1"/>
<dbReference type="ProteomicsDB" id="222371"/>
<dbReference type="EnsemblPlants" id="AT2G37470.1">
    <property type="protein sequence ID" value="AT2G37470.1"/>
    <property type="gene ID" value="AT2G37470"/>
</dbReference>
<dbReference type="GeneID" id="818324"/>
<dbReference type="Gramene" id="AT2G37470.1">
    <property type="protein sequence ID" value="AT2G37470.1"/>
    <property type="gene ID" value="AT2G37470"/>
</dbReference>
<dbReference type="KEGG" id="ath:AT2G37470"/>
<dbReference type="Araport" id="AT2G37470"/>
<dbReference type="TAIR" id="AT2G37470"/>
<dbReference type="eggNOG" id="KOG1744">
    <property type="taxonomic scope" value="Eukaryota"/>
</dbReference>
<dbReference type="HOGENOM" id="CLU_075666_1_3_1"/>
<dbReference type="InParanoid" id="Q9ZUS0"/>
<dbReference type="OMA" id="WAYMHAS"/>
<dbReference type="OrthoDB" id="1913820at2759"/>
<dbReference type="PhylomeDB" id="Q9ZUS0"/>
<dbReference type="CD-CODE" id="4299E36E">
    <property type="entry name" value="Nucleolus"/>
</dbReference>
<dbReference type="PRO" id="PR:Q9ZUS0"/>
<dbReference type="Proteomes" id="UP000006548">
    <property type="component" value="Chromosome 2"/>
</dbReference>
<dbReference type="ExpressionAtlas" id="Q9ZUS0">
    <property type="expression patterns" value="baseline and differential"/>
</dbReference>
<dbReference type="GO" id="GO:0005783">
    <property type="term" value="C:endoplasmic reticulum"/>
    <property type="evidence" value="ECO:0007005"/>
    <property type="project" value="TAIR"/>
</dbReference>
<dbReference type="GO" id="GO:0000786">
    <property type="term" value="C:nucleosome"/>
    <property type="evidence" value="ECO:0007669"/>
    <property type="project" value="UniProtKB-KW"/>
</dbReference>
<dbReference type="GO" id="GO:0005634">
    <property type="term" value="C:nucleus"/>
    <property type="evidence" value="ECO:0007669"/>
    <property type="project" value="UniProtKB-SubCell"/>
</dbReference>
<dbReference type="GO" id="GO:0003677">
    <property type="term" value="F:DNA binding"/>
    <property type="evidence" value="ECO:0007669"/>
    <property type="project" value="UniProtKB-KW"/>
</dbReference>
<dbReference type="GO" id="GO:0046982">
    <property type="term" value="F:protein heterodimerization activity"/>
    <property type="evidence" value="ECO:0007669"/>
    <property type="project" value="InterPro"/>
</dbReference>
<dbReference type="GO" id="GO:0030527">
    <property type="term" value="F:structural constituent of chromatin"/>
    <property type="evidence" value="ECO:0007669"/>
    <property type="project" value="InterPro"/>
</dbReference>
<dbReference type="CDD" id="cd22910">
    <property type="entry name" value="HFD_H2B"/>
    <property type="match status" value="1"/>
</dbReference>
<dbReference type="FunFam" id="1.10.20.10:FF:000014">
    <property type="entry name" value="Histone H2B"/>
    <property type="match status" value="1"/>
</dbReference>
<dbReference type="Gene3D" id="1.10.20.10">
    <property type="entry name" value="Histone, subunit A"/>
    <property type="match status" value="1"/>
</dbReference>
<dbReference type="InterPro" id="IPR009072">
    <property type="entry name" value="Histone-fold"/>
</dbReference>
<dbReference type="InterPro" id="IPR007125">
    <property type="entry name" value="Histone_H2A/H2B/H3"/>
</dbReference>
<dbReference type="InterPro" id="IPR000558">
    <property type="entry name" value="Histone_H2B"/>
</dbReference>
<dbReference type="InterPro" id="IPR055333">
    <property type="entry name" value="HISTONE_H2B_site"/>
</dbReference>
<dbReference type="PANTHER" id="PTHR23428">
    <property type="entry name" value="HISTONE H2B"/>
    <property type="match status" value="1"/>
</dbReference>
<dbReference type="Pfam" id="PF00125">
    <property type="entry name" value="Histone"/>
    <property type="match status" value="1"/>
</dbReference>
<dbReference type="PRINTS" id="PR00621">
    <property type="entry name" value="HISTONEH2B"/>
</dbReference>
<dbReference type="SMART" id="SM00427">
    <property type="entry name" value="H2B"/>
    <property type="match status" value="1"/>
</dbReference>
<dbReference type="SUPFAM" id="SSF47113">
    <property type="entry name" value="Histone-fold"/>
    <property type="match status" value="1"/>
</dbReference>
<dbReference type="PROSITE" id="PS00357">
    <property type="entry name" value="HISTONE_H2B"/>
    <property type="match status" value="1"/>
</dbReference>
<proteinExistence type="evidence at protein level"/>
<sequence>MAPKAAEKKPAEKKPAGKAPAEKLPKAEKKISKDAGGSEKKKKKSKKSVETYKIYIFKVLKQVHPDVGISGKAMGIMNSFINDIFEKLAQESSKLARYNKKPTITSREIQTAVRLVLPGELAKHAVSEGTKAVTKFTS</sequence>
<organism>
    <name type="scientific">Arabidopsis thaliana</name>
    <name type="common">Mouse-ear cress</name>
    <dbReference type="NCBI Taxonomy" id="3702"/>
    <lineage>
        <taxon>Eukaryota</taxon>
        <taxon>Viridiplantae</taxon>
        <taxon>Streptophyta</taxon>
        <taxon>Embryophyta</taxon>
        <taxon>Tracheophyta</taxon>
        <taxon>Spermatophyta</taxon>
        <taxon>Magnoliopsida</taxon>
        <taxon>eudicotyledons</taxon>
        <taxon>Gunneridae</taxon>
        <taxon>Pentapetalae</taxon>
        <taxon>rosids</taxon>
        <taxon>malvids</taxon>
        <taxon>Brassicales</taxon>
        <taxon>Brassicaceae</taxon>
        <taxon>Camelineae</taxon>
        <taxon>Arabidopsis</taxon>
    </lineage>
</organism>
<reference key="1">
    <citation type="journal article" date="1999" name="Nature">
        <title>Sequence and analysis of chromosome 2 of the plant Arabidopsis thaliana.</title>
        <authorList>
            <person name="Lin X."/>
            <person name="Kaul S."/>
            <person name="Rounsley S.D."/>
            <person name="Shea T.P."/>
            <person name="Benito M.-I."/>
            <person name="Town C.D."/>
            <person name="Fujii C.Y."/>
            <person name="Mason T.M."/>
            <person name="Bowman C.L."/>
            <person name="Barnstead M.E."/>
            <person name="Feldblyum T.V."/>
            <person name="Buell C.R."/>
            <person name="Ketchum K.A."/>
            <person name="Lee J.J."/>
            <person name="Ronning C.M."/>
            <person name="Koo H.L."/>
            <person name="Moffat K.S."/>
            <person name="Cronin L.A."/>
            <person name="Shen M."/>
            <person name="Pai G."/>
            <person name="Van Aken S."/>
            <person name="Umayam L."/>
            <person name="Tallon L.J."/>
            <person name="Gill J.E."/>
            <person name="Adams M.D."/>
            <person name="Carrera A.J."/>
            <person name="Creasy T.H."/>
            <person name="Goodman H.M."/>
            <person name="Somerville C.R."/>
            <person name="Copenhaver G.P."/>
            <person name="Preuss D."/>
            <person name="Nierman W.C."/>
            <person name="White O."/>
            <person name="Eisen J.A."/>
            <person name="Salzberg S.L."/>
            <person name="Fraser C.M."/>
            <person name="Venter J.C."/>
        </authorList>
    </citation>
    <scope>NUCLEOTIDE SEQUENCE [LARGE SCALE GENOMIC DNA]</scope>
    <source>
        <strain>cv. Columbia</strain>
    </source>
</reference>
<reference key="2">
    <citation type="journal article" date="2017" name="Plant J.">
        <title>Araport11: a complete reannotation of the Arabidopsis thaliana reference genome.</title>
        <authorList>
            <person name="Cheng C.Y."/>
            <person name="Krishnakumar V."/>
            <person name="Chan A.P."/>
            <person name="Thibaud-Nissen F."/>
            <person name="Schobel S."/>
            <person name="Town C.D."/>
        </authorList>
    </citation>
    <scope>GENOME REANNOTATION</scope>
    <source>
        <strain>cv. Columbia</strain>
    </source>
</reference>
<reference key="3">
    <citation type="journal article" date="2003" name="Science">
        <title>Empirical analysis of transcriptional activity in the Arabidopsis genome.</title>
        <authorList>
            <person name="Yamada K."/>
            <person name="Lim J."/>
            <person name="Dale J.M."/>
            <person name="Chen H."/>
            <person name="Shinn P."/>
            <person name="Palm C.J."/>
            <person name="Southwick A.M."/>
            <person name="Wu H.C."/>
            <person name="Kim C.J."/>
            <person name="Nguyen M."/>
            <person name="Pham P.K."/>
            <person name="Cheuk R.F."/>
            <person name="Karlin-Newmann G."/>
            <person name="Liu S.X."/>
            <person name="Lam B."/>
            <person name="Sakano H."/>
            <person name="Wu T."/>
            <person name="Yu G."/>
            <person name="Miranda M."/>
            <person name="Quach H.L."/>
            <person name="Tripp M."/>
            <person name="Chang C.H."/>
            <person name="Lee J.M."/>
            <person name="Toriumi M.J."/>
            <person name="Chan M.M."/>
            <person name="Tang C.C."/>
            <person name="Onodera C.S."/>
            <person name="Deng J.M."/>
            <person name="Akiyama K."/>
            <person name="Ansari Y."/>
            <person name="Arakawa T."/>
            <person name="Banh J."/>
            <person name="Banno F."/>
            <person name="Bowser L."/>
            <person name="Brooks S.Y."/>
            <person name="Carninci P."/>
            <person name="Chao Q."/>
            <person name="Choy N."/>
            <person name="Enju A."/>
            <person name="Goldsmith A.D."/>
            <person name="Gurjal M."/>
            <person name="Hansen N.F."/>
            <person name="Hayashizaki Y."/>
            <person name="Johnson-Hopson C."/>
            <person name="Hsuan V.W."/>
            <person name="Iida K."/>
            <person name="Karnes M."/>
            <person name="Khan S."/>
            <person name="Koesema E."/>
            <person name="Ishida J."/>
            <person name="Jiang P.X."/>
            <person name="Jones T."/>
            <person name="Kawai J."/>
            <person name="Kamiya A."/>
            <person name="Meyers C."/>
            <person name="Nakajima M."/>
            <person name="Narusaka M."/>
            <person name="Seki M."/>
            <person name="Sakurai T."/>
            <person name="Satou M."/>
            <person name="Tamse R."/>
            <person name="Vaysberg M."/>
            <person name="Wallender E.K."/>
            <person name="Wong C."/>
            <person name="Yamamura Y."/>
            <person name="Yuan S."/>
            <person name="Shinozaki K."/>
            <person name="Davis R.W."/>
            <person name="Theologis A."/>
            <person name="Ecker J.R."/>
        </authorList>
    </citation>
    <scope>NUCLEOTIDE SEQUENCE [LARGE SCALE MRNA]</scope>
    <source>
        <strain>cv. Columbia</strain>
    </source>
</reference>
<reference key="4">
    <citation type="submission" date="2002-03" db="EMBL/GenBank/DDBJ databases">
        <title>Full-length cDNA from Arabidopsis thaliana.</title>
        <authorList>
            <person name="Brover V.V."/>
            <person name="Troukhan M.E."/>
            <person name="Alexandrov N.A."/>
            <person name="Lu Y.-P."/>
            <person name="Flavell R.B."/>
            <person name="Feldmann K.A."/>
        </authorList>
    </citation>
    <scope>NUCLEOTIDE SEQUENCE [LARGE SCALE MRNA]</scope>
</reference>
<reference key="5">
    <citation type="journal article" date="2007" name="Nature">
        <title>Control of DNA methylation and heterochromatic silencing by histone H2B deubiquitination.</title>
        <authorList>
            <person name="Sridhar V.V."/>
            <person name="Kapoor A."/>
            <person name="Zhang K."/>
            <person name="Zhu J."/>
            <person name="Zhou T."/>
            <person name="Hasegawa P.M."/>
            <person name="Bressan R.A."/>
            <person name="Zhu J.-K."/>
        </authorList>
    </citation>
    <scope>UBIQUITINATION AT LYS-135</scope>
    <scope>IDENTIFICATION BY MASS SPECTROMETRY</scope>
</reference>
<accession>Q9ZUS0</accession>
<feature type="initiator methionine" description="Removed" evidence="4">
    <location>
        <position position="1"/>
    </location>
</feature>
<feature type="chain" id="PRO_0000238691" description="Histone H2B.4">
    <location>
        <begin position="2"/>
        <end position="138"/>
    </location>
</feature>
<feature type="region of interest" description="Disordered" evidence="6">
    <location>
        <begin position="1"/>
        <end position="48"/>
    </location>
</feature>
<feature type="compositionally biased region" description="Basic and acidic residues" evidence="6">
    <location>
        <begin position="1"/>
        <end position="39"/>
    </location>
</feature>
<feature type="modified residue" description="N,N,N-trimethylalanine; alternate" evidence="4">
    <location>
        <position position="2"/>
    </location>
</feature>
<feature type="modified residue" description="N,N-dimethylalanine; alternate" evidence="4">
    <location>
        <position position="2"/>
    </location>
</feature>
<feature type="modified residue" description="N-methylalanine; alternate" evidence="4">
    <location>
        <position position="2"/>
    </location>
</feature>
<feature type="modified residue" description="N6-methyllysine" evidence="5">
    <location>
        <position position="4"/>
    </location>
</feature>
<feature type="modified residue" description="N6-acetyllysine" evidence="4">
    <location>
        <position position="8"/>
    </location>
</feature>
<feature type="modified residue" description="N6-acetyllysine" evidence="2">
    <location>
        <position position="13"/>
    </location>
</feature>
<feature type="modified residue" description="N6,N6-dimethyllysine" evidence="3">
    <location>
        <position position="14"/>
    </location>
</feature>
<feature type="modified residue" description="N6-acetyllysine" evidence="2">
    <location>
        <position position="18"/>
    </location>
</feature>
<feature type="modified residue" description="N6-acetyllysine" evidence="2">
    <location>
        <position position="23"/>
    </location>
</feature>
<feature type="modified residue" description="N6-acetyllysine" evidence="4">
    <location>
        <position position="29"/>
    </location>
</feature>
<feature type="modified residue" description="N6-acetyllysine" evidence="4">
    <location>
        <position position="30"/>
    </location>
</feature>
<feature type="cross-link" description="Glycyl lysine isopeptide (Lys-Gly) (interchain with G-Cter in ubiquitin)" evidence="4">
    <location>
        <position position="135"/>
    </location>
</feature>